<organism>
    <name type="scientific">Brucella anthropi (strain ATCC 49188 / DSM 6882 / CCUG 24695 / JCM 21032 / LMG 3331 / NBRC 15819 / NCTC 12168 / Alc 37)</name>
    <name type="common">Ochrobactrum anthropi</name>
    <dbReference type="NCBI Taxonomy" id="439375"/>
    <lineage>
        <taxon>Bacteria</taxon>
        <taxon>Pseudomonadati</taxon>
        <taxon>Pseudomonadota</taxon>
        <taxon>Alphaproteobacteria</taxon>
        <taxon>Hyphomicrobiales</taxon>
        <taxon>Brucellaceae</taxon>
        <taxon>Brucella/Ochrobactrum group</taxon>
        <taxon>Brucella</taxon>
    </lineage>
</organism>
<accession>A6X259</accession>
<gene>
    <name evidence="1" type="primary">pepA</name>
    <name type="ordered locus">Oant_2600</name>
</gene>
<reference key="1">
    <citation type="journal article" date="2011" name="J. Bacteriol.">
        <title>Genome of Ochrobactrum anthropi ATCC 49188 T, a versatile opportunistic pathogen and symbiont of several eukaryotic hosts.</title>
        <authorList>
            <person name="Chain P.S."/>
            <person name="Lang D.M."/>
            <person name="Comerci D.J."/>
            <person name="Malfatti S.A."/>
            <person name="Vergez L.M."/>
            <person name="Shin M."/>
            <person name="Ugalde R.A."/>
            <person name="Garcia E."/>
            <person name="Tolmasky M.E."/>
        </authorList>
    </citation>
    <scope>NUCLEOTIDE SEQUENCE [LARGE SCALE GENOMIC DNA]</scope>
    <source>
        <strain>ATCC 49188 / DSM 6882 / CCUG 24695 / JCM 21032 / LMG 3331 / NBRC 15819 / NCTC 12168 / Alc 37</strain>
    </source>
</reference>
<evidence type="ECO:0000255" key="1">
    <source>
        <dbReference type="HAMAP-Rule" id="MF_00181"/>
    </source>
</evidence>
<feature type="chain" id="PRO_1000019947" description="Probable cytosol aminopeptidase">
    <location>
        <begin position="1"/>
        <end position="498"/>
    </location>
</feature>
<feature type="active site" evidence="1">
    <location>
        <position position="276"/>
    </location>
</feature>
<feature type="active site" evidence="1">
    <location>
        <position position="350"/>
    </location>
</feature>
<feature type="binding site" evidence="1">
    <location>
        <position position="264"/>
    </location>
    <ligand>
        <name>Mn(2+)</name>
        <dbReference type="ChEBI" id="CHEBI:29035"/>
        <label>2</label>
    </ligand>
</feature>
<feature type="binding site" evidence="1">
    <location>
        <position position="269"/>
    </location>
    <ligand>
        <name>Mn(2+)</name>
        <dbReference type="ChEBI" id="CHEBI:29035"/>
        <label>1</label>
    </ligand>
</feature>
<feature type="binding site" evidence="1">
    <location>
        <position position="269"/>
    </location>
    <ligand>
        <name>Mn(2+)</name>
        <dbReference type="ChEBI" id="CHEBI:29035"/>
        <label>2</label>
    </ligand>
</feature>
<feature type="binding site" evidence="1">
    <location>
        <position position="287"/>
    </location>
    <ligand>
        <name>Mn(2+)</name>
        <dbReference type="ChEBI" id="CHEBI:29035"/>
        <label>2</label>
    </ligand>
</feature>
<feature type="binding site" evidence="1">
    <location>
        <position position="346"/>
    </location>
    <ligand>
        <name>Mn(2+)</name>
        <dbReference type="ChEBI" id="CHEBI:29035"/>
        <label>1</label>
    </ligand>
</feature>
<feature type="binding site" evidence="1">
    <location>
        <position position="348"/>
    </location>
    <ligand>
        <name>Mn(2+)</name>
        <dbReference type="ChEBI" id="CHEBI:29035"/>
        <label>1</label>
    </ligand>
</feature>
<feature type="binding site" evidence="1">
    <location>
        <position position="348"/>
    </location>
    <ligand>
        <name>Mn(2+)</name>
        <dbReference type="ChEBI" id="CHEBI:29035"/>
        <label>2</label>
    </ligand>
</feature>
<comment type="function">
    <text evidence="1">Presumably involved in the processing and regular turnover of intracellular proteins. Catalyzes the removal of unsubstituted N-terminal amino acids from various peptides.</text>
</comment>
<comment type="catalytic activity">
    <reaction evidence="1">
        <text>Release of an N-terminal amino acid, Xaa-|-Yaa-, in which Xaa is preferably Leu, but may be other amino acids including Pro although not Arg or Lys, and Yaa may be Pro. Amino acid amides and methyl esters are also readily hydrolyzed, but rates on arylamides are exceedingly low.</text>
        <dbReference type="EC" id="3.4.11.1"/>
    </reaction>
</comment>
<comment type="catalytic activity">
    <reaction evidence="1">
        <text>Release of an N-terminal amino acid, preferentially leucine, but not glutamic or aspartic acids.</text>
        <dbReference type="EC" id="3.4.11.10"/>
    </reaction>
</comment>
<comment type="cofactor">
    <cofactor evidence="1">
        <name>Mn(2+)</name>
        <dbReference type="ChEBI" id="CHEBI:29035"/>
    </cofactor>
    <text evidence="1">Binds 2 manganese ions per subunit.</text>
</comment>
<comment type="subcellular location">
    <subcellularLocation>
        <location evidence="1">Cytoplasm</location>
    </subcellularLocation>
</comment>
<comment type="similarity">
    <text evidence="1">Belongs to the peptidase M17 family.</text>
</comment>
<proteinExistence type="inferred from homology"/>
<name>AMPA_BRUA4</name>
<keyword id="KW-0031">Aminopeptidase</keyword>
<keyword id="KW-0963">Cytoplasm</keyword>
<keyword id="KW-0378">Hydrolase</keyword>
<keyword id="KW-0464">Manganese</keyword>
<keyword id="KW-0479">Metal-binding</keyword>
<keyword id="KW-0645">Protease</keyword>
<keyword id="KW-1185">Reference proteome</keyword>
<sequence length="498" mass="52698">MSKRPSISFSDFAAPEKGVSIVLVAKGGGFADEAAQAAGGAEKIKRIAEISGFTGALGKTAEAIETTSSGVDKIVLVGVGEPGKLGNDDWLKIGGAAFSRIGKAERATVTLALPETTIAGDEAADLALGMILRSYKFERYKTRKNNEENGDPKHAAKISICVADPHTAKRAFEVAEAVADGVIQARNLVNEPANILGPVEFAQEAEKLEKLGVKIEVLGEKEMKKLGMGALLGVAQGSVRPPRLVIMEWQGAKSKEKPVAFVGKGVVFDTGGISIKPAAGMEDMKGDMGGAAAVTGLMRALAGRKAKVNAIGIIGLVENMPDGNAQRPGDIVTSMSGQTIEVINTDAEGRLVLADALHYTNDRFKPRFIINLATLTGAVMVALGQYHAGLFSNDDELADQLYDAGQLTGEKLWRLPLGTEYDKMIDSKFADMKNSAGRYGGSITAAQFLKRFVGETAWAHLDVAGTAMGSPANEYSQTWASGYGVRLLDRLVRDHFES</sequence>
<dbReference type="EC" id="3.4.11.1" evidence="1"/>
<dbReference type="EC" id="3.4.11.10" evidence="1"/>
<dbReference type="EMBL" id="CP000758">
    <property type="protein sequence ID" value="ABS15313.1"/>
    <property type="molecule type" value="Genomic_DNA"/>
</dbReference>
<dbReference type="RefSeq" id="WP_012092390.1">
    <property type="nucleotide sequence ID" value="NC_009667.1"/>
</dbReference>
<dbReference type="SMR" id="A6X259"/>
<dbReference type="STRING" id="439375.Oant_2600"/>
<dbReference type="KEGG" id="oan:Oant_2600"/>
<dbReference type="PATRIC" id="fig|439375.7.peg.2741"/>
<dbReference type="eggNOG" id="COG0260">
    <property type="taxonomic scope" value="Bacteria"/>
</dbReference>
<dbReference type="HOGENOM" id="CLU_013734_6_0_5"/>
<dbReference type="PhylomeDB" id="A6X259"/>
<dbReference type="Proteomes" id="UP000002301">
    <property type="component" value="Chromosome 1"/>
</dbReference>
<dbReference type="GO" id="GO:0005737">
    <property type="term" value="C:cytoplasm"/>
    <property type="evidence" value="ECO:0007669"/>
    <property type="project" value="UniProtKB-SubCell"/>
</dbReference>
<dbReference type="GO" id="GO:0030145">
    <property type="term" value="F:manganese ion binding"/>
    <property type="evidence" value="ECO:0007669"/>
    <property type="project" value="UniProtKB-UniRule"/>
</dbReference>
<dbReference type="GO" id="GO:0070006">
    <property type="term" value="F:metalloaminopeptidase activity"/>
    <property type="evidence" value="ECO:0007669"/>
    <property type="project" value="InterPro"/>
</dbReference>
<dbReference type="GO" id="GO:0006508">
    <property type="term" value="P:proteolysis"/>
    <property type="evidence" value="ECO:0007669"/>
    <property type="project" value="UniProtKB-KW"/>
</dbReference>
<dbReference type="CDD" id="cd00433">
    <property type="entry name" value="Peptidase_M17"/>
    <property type="match status" value="1"/>
</dbReference>
<dbReference type="Gene3D" id="3.40.220.10">
    <property type="entry name" value="Leucine Aminopeptidase, subunit E, domain 1"/>
    <property type="match status" value="1"/>
</dbReference>
<dbReference type="Gene3D" id="3.40.630.10">
    <property type="entry name" value="Zn peptidases"/>
    <property type="match status" value="1"/>
</dbReference>
<dbReference type="HAMAP" id="MF_00181">
    <property type="entry name" value="Cytosol_peptidase_M17"/>
    <property type="match status" value="1"/>
</dbReference>
<dbReference type="InterPro" id="IPR011356">
    <property type="entry name" value="Leucine_aapep/pepB"/>
</dbReference>
<dbReference type="InterPro" id="IPR043472">
    <property type="entry name" value="Macro_dom-like"/>
</dbReference>
<dbReference type="InterPro" id="IPR000819">
    <property type="entry name" value="Peptidase_M17_C"/>
</dbReference>
<dbReference type="InterPro" id="IPR023042">
    <property type="entry name" value="Peptidase_M17_leu_NH2_pept"/>
</dbReference>
<dbReference type="InterPro" id="IPR008283">
    <property type="entry name" value="Peptidase_M17_N"/>
</dbReference>
<dbReference type="NCBIfam" id="NF002073">
    <property type="entry name" value="PRK00913.1-2"/>
    <property type="match status" value="1"/>
</dbReference>
<dbReference type="NCBIfam" id="NF002074">
    <property type="entry name" value="PRK00913.1-4"/>
    <property type="match status" value="1"/>
</dbReference>
<dbReference type="NCBIfam" id="NF002075">
    <property type="entry name" value="PRK00913.2-2"/>
    <property type="match status" value="1"/>
</dbReference>
<dbReference type="NCBIfam" id="NF002077">
    <property type="entry name" value="PRK00913.2-4"/>
    <property type="match status" value="1"/>
</dbReference>
<dbReference type="NCBIfam" id="NF002083">
    <property type="entry name" value="PRK00913.3-5"/>
    <property type="match status" value="1"/>
</dbReference>
<dbReference type="PANTHER" id="PTHR11963:SF23">
    <property type="entry name" value="CYTOSOL AMINOPEPTIDASE"/>
    <property type="match status" value="1"/>
</dbReference>
<dbReference type="PANTHER" id="PTHR11963">
    <property type="entry name" value="LEUCINE AMINOPEPTIDASE-RELATED"/>
    <property type="match status" value="1"/>
</dbReference>
<dbReference type="Pfam" id="PF00883">
    <property type="entry name" value="Peptidase_M17"/>
    <property type="match status" value="1"/>
</dbReference>
<dbReference type="Pfam" id="PF02789">
    <property type="entry name" value="Peptidase_M17_N"/>
    <property type="match status" value="1"/>
</dbReference>
<dbReference type="PRINTS" id="PR00481">
    <property type="entry name" value="LAMNOPPTDASE"/>
</dbReference>
<dbReference type="SUPFAM" id="SSF52949">
    <property type="entry name" value="Macro domain-like"/>
    <property type="match status" value="1"/>
</dbReference>
<dbReference type="SUPFAM" id="SSF53187">
    <property type="entry name" value="Zn-dependent exopeptidases"/>
    <property type="match status" value="1"/>
</dbReference>
<dbReference type="PROSITE" id="PS00631">
    <property type="entry name" value="CYTOSOL_AP"/>
    <property type="match status" value="1"/>
</dbReference>
<protein>
    <recommendedName>
        <fullName evidence="1">Probable cytosol aminopeptidase</fullName>
        <ecNumber evidence="1">3.4.11.1</ecNumber>
    </recommendedName>
    <alternativeName>
        <fullName evidence="1">Leucine aminopeptidase</fullName>
        <shortName evidence="1">LAP</shortName>
        <ecNumber evidence="1">3.4.11.10</ecNumber>
    </alternativeName>
    <alternativeName>
        <fullName evidence="1">Leucyl aminopeptidase</fullName>
    </alternativeName>
</protein>